<comment type="function">
    <text evidence="1">Catalyzes the dephosphorylation of undecaprenyl diphosphate (UPP). Confers resistance to bacitracin.</text>
</comment>
<comment type="catalytic activity">
    <reaction evidence="1">
        <text>di-trans,octa-cis-undecaprenyl diphosphate + H2O = di-trans,octa-cis-undecaprenyl phosphate + phosphate + H(+)</text>
        <dbReference type="Rhea" id="RHEA:28094"/>
        <dbReference type="ChEBI" id="CHEBI:15377"/>
        <dbReference type="ChEBI" id="CHEBI:15378"/>
        <dbReference type="ChEBI" id="CHEBI:43474"/>
        <dbReference type="ChEBI" id="CHEBI:58405"/>
        <dbReference type="ChEBI" id="CHEBI:60392"/>
        <dbReference type="EC" id="3.6.1.27"/>
    </reaction>
</comment>
<comment type="subcellular location">
    <subcellularLocation>
        <location evidence="1">Cell inner membrane</location>
        <topology evidence="1">Multi-pass membrane protein</topology>
    </subcellularLocation>
</comment>
<comment type="miscellaneous">
    <text>Bacitracin is thought to be involved in the inhibition of peptidoglycan synthesis by sequestering undecaprenyl diphosphate, thereby reducing the pool of lipid carrier available.</text>
</comment>
<comment type="similarity">
    <text evidence="1">Belongs to the UppP family.</text>
</comment>
<comment type="sequence caution" evidence="2">
    <conflict type="erroneous initiation">
        <sequence resource="EMBL-CDS" id="AAF84647"/>
    </conflict>
</comment>
<keyword id="KW-0046">Antibiotic resistance</keyword>
<keyword id="KW-0997">Cell inner membrane</keyword>
<keyword id="KW-1003">Cell membrane</keyword>
<keyword id="KW-0133">Cell shape</keyword>
<keyword id="KW-0961">Cell wall biogenesis/degradation</keyword>
<keyword id="KW-0378">Hydrolase</keyword>
<keyword id="KW-0472">Membrane</keyword>
<keyword id="KW-0573">Peptidoglycan synthesis</keyword>
<keyword id="KW-0812">Transmembrane</keyword>
<keyword id="KW-1133">Transmembrane helix</keyword>
<feature type="chain" id="PRO_0000151244" description="Undecaprenyl-diphosphatase">
    <location>
        <begin position="1"/>
        <end position="261"/>
    </location>
</feature>
<feature type="transmembrane region" description="Helical" evidence="1">
    <location>
        <begin position="38"/>
        <end position="58"/>
    </location>
</feature>
<feature type="transmembrane region" description="Helical" evidence="1">
    <location>
        <begin position="75"/>
        <end position="95"/>
    </location>
</feature>
<feature type="transmembrane region" description="Helical" evidence="1">
    <location>
        <begin position="106"/>
        <end position="126"/>
    </location>
</feature>
<feature type="transmembrane region" description="Helical" evidence="1">
    <location>
        <begin position="136"/>
        <end position="156"/>
    </location>
</feature>
<feature type="transmembrane region" description="Helical" evidence="1">
    <location>
        <begin position="181"/>
        <end position="201"/>
    </location>
</feature>
<feature type="transmembrane region" description="Helical" evidence="1">
    <location>
        <begin position="217"/>
        <end position="237"/>
    </location>
</feature>
<feature type="transmembrane region" description="Helical" evidence="1">
    <location>
        <begin position="241"/>
        <end position="261"/>
    </location>
</feature>
<accession>Q9PCE0</accession>
<name>UPPP_XYLFA</name>
<proteinExistence type="inferred from homology"/>
<reference key="1">
    <citation type="journal article" date="2000" name="Nature">
        <title>The genome sequence of the plant pathogen Xylella fastidiosa.</title>
        <authorList>
            <person name="Simpson A.J.G."/>
            <person name="Reinach F.C."/>
            <person name="Arruda P."/>
            <person name="Abreu F.A."/>
            <person name="Acencio M."/>
            <person name="Alvarenga R."/>
            <person name="Alves L.M.C."/>
            <person name="Araya J.E."/>
            <person name="Baia G.S."/>
            <person name="Baptista C.S."/>
            <person name="Barros M.H."/>
            <person name="Bonaccorsi E.D."/>
            <person name="Bordin S."/>
            <person name="Bove J.M."/>
            <person name="Briones M.R.S."/>
            <person name="Bueno M.R.P."/>
            <person name="Camargo A.A."/>
            <person name="Camargo L.E.A."/>
            <person name="Carraro D.M."/>
            <person name="Carrer H."/>
            <person name="Colauto N.B."/>
            <person name="Colombo C."/>
            <person name="Costa F.F."/>
            <person name="Costa M.C.R."/>
            <person name="Costa-Neto C.M."/>
            <person name="Coutinho L.L."/>
            <person name="Cristofani M."/>
            <person name="Dias-Neto E."/>
            <person name="Docena C."/>
            <person name="El-Dorry H."/>
            <person name="Facincani A.P."/>
            <person name="Ferreira A.J.S."/>
            <person name="Ferreira V.C.A."/>
            <person name="Ferro J.A."/>
            <person name="Fraga J.S."/>
            <person name="Franca S.C."/>
            <person name="Franco M.C."/>
            <person name="Frohme M."/>
            <person name="Furlan L.R."/>
            <person name="Garnier M."/>
            <person name="Goldman G.H."/>
            <person name="Goldman M.H.S."/>
            <person name="Gomes S.L."/>
            <person name="Gruber A."/>
            <person name="Ho P.L."/>
            <person name="Hoheisel J.D."/>
            <person name="Junqueira M.L."/>
            <person name="Kemper E.L."/>
            <person name="Kitajima J.P."/>
            <person name="Krieger J.E."/>
            <person name="Kuramae E.E."/>
            <person name="Laigret F."/>
            <person name="Lambais M.R."/>
            <person name="Leite L.C.C."/>
            <person name="Lemos E.G.M."/>
            <person name="Lemos M.V.F."/>
            <person name="Lopes S.A."/>
            <person name="Lopes C.R."/>
            <person name="Machado J.A."/>
            <person name="Machado M.A."/>
            <person name="Madeira A.M.B.N."/>
            <person name="Madeira H.M.F."/>
            <person name="Marino C.L."/>
            <person name="Marques M.V."/>
            <person name="Martins E.A.L."/>
            <person name="Martins E.M.F."/>
            <person name="Matsukuma A.Y."/>
            <person name="Menck C.F.M."/>
            <person name="Miracca E.C."/>
            <person name="Miyaki C.Y."/>
            <person name="Monteiro-Vitorello C.B."/>
            <person name="Moon D.H."/>
            <person name="Nagai M.A."/>
            <person name="Nascimento A.L.T.O."/>
            <person name="Netto L.E.S."/>
            <person name="Nhani A. Jr."/>
            <person name="Nobrega F.G."/>
            <person name="Nunes L.R."/>
            <person name="Oliveira M.A."/>
            <person name="de Oliveira M.C."/>
            <person name="de Oliveira R.C."/>
            <person name="Palmieri D.A."/>
            <person name="Paris A."/>
            <person name="Peixoto B.R."/>
            <person name="Pereira G.A.G."/>
            <person name="Pereira H.A. Jr."/>
            <person name="Pesquero J.B."/>
            <person name="Quaggio R.B."/>
            <person name="Roberto P.G."/>
            <person name="Rodrigues V."/>
            <person name="de Rosa A.J.M."/>
            <person name="de Rosa V.E. Jr."/>
            <person name="de Sa R.G."/>
            <person name="Santelli R.V."/>
            <person name="Sawasaki H.E."/>
            <person name="da Silva A.C.R."/>
            <person name="da Silva A.M."/>
            <person name="da Silva F.R."/>
            <person name="Silva W.A. Jr."/>
            <person name="da Silveira J.F."/>
            <person name="Silvestri M.L.Z."/>
            <person name="Siqueira W.J."/>
            <person name="de Souza A.A."/>
            <person name="de Souza A.P."/>
            <person name="Terenzi M.F."/>
            <person name="Truffi D."/>
            <person name="Tsai S.M."/>
            <person name="Tsuhako M.H."/>
            <person name="Vallada H."/>
            <person name="Van Sluys M.A."/>
            <person name="Verjovski-Almeida S."/>
            <person name="Vettore A.L."/>
            <person name="Zago M.A."/>
            <person name="Zatz M."/>
            <person name="Meidanis J."/>
            <person name="Setubal J.C."/>
        </authorList>
    </citation>
    <scope>NUCLEOTIDE SEQUENCE [LARGE SCALE GENOMIC DNA]</scope>
    <source>
        <strain>9a5c</strain>
    </source>
</reference>
<organism>
    <name type="scientific">Xylella fastidiosa (strain 9a5c)</name>
    <dbReference type="NCBI Taxonomy" id="160492"/>
    <lineage>
        <taxon>Bacteria</taxon>
        <taxon>Pseudomonadati</taxon>
        <taxon>Pseudomonadota</taxon>
        <taxon>Gammaproteobacteria</taxon>
        <taxon>Lysobacterales</taxon>
        <taxon>Lysobacteraceae</taxon>
        <taxon>Xylella</taxon>
    </lineage>
</organism>
<gene>
    <name evidence="1" type="primary">uppP</name>
    <name type="synonym">bacA</name>
    <name type="synonym">upk</name>
    <name type="ordered locus">XF_1841</name>
</gene>
<evidence type="ECO:0000255" key="1">
    <source>
        <dbReference type="HAMAP-Rule" id="MF_01006"/>
    </source>
</evidence>
<evidence type="ECO:0000305" key="2"/>
<sequence>MFELFTALMLGILEGITEFLPVSSTGHLLIAEHWLGSRSDFFNIVIQAGAILAITFVFRKRVWSLATGLDKYSNRDYVMKLATAFLITAVVGLAVRKANWQLPETIQPIAWALIIGGIWILIAESVAKHLPERENVTWSVAIAVGLAQVVAGVFPGTSRSASTIFLAMLLGLSKRSAAAEFSFLVGIPTMFSASSYACFELFKRGELLHENWLEVSVAFVAAMLTGFAVVKWLLGYIKNHSFAPFAYYRIALGLVLLTWLT</sequence>
<dbReference type="EC" id="3.6.1.27" evidence="1"/>
<dbReference type="EMBL" id="AE003849">
    <property type="protein sequence ID" value="AAF84647.1"/>
    <property type="status" value="ALT_INIT"/>
    <property type="molecule type" value="Genomic_DNA"/>
</dbReference>
<dbReference type="PIR" id="F82631">
    <property type="entry name" value="F82631"/>
</dbReference>
<dbReference type="RefSeq" id="WP_010894307.1">
    <property type="nucleotide sequence ID" value="NC_002488.3"/>
</dbReference>
<dbReference type="SMR" id="Q9PCE0"/>
<dbReference type="STRING" id="160492.XF_1841"/>
<dbReference type="KEGG" id="xfa:XF_1841"/>
<dbReference type="eggNOG" id="COG1968">
    <property type="taxonomic scope" value="Bacteria"/>
</dbReference>
<dbReference type="HOGENOM" id="CLU_060296_2_0_6"/>
<dbReference type="Proteomes" id="UP000000812">
    <property type="component" value="Chromosome"/>
</dbReference>
<dbReference type="GO" id="GO:0005886">
    <property type="term" value="C:plasma membrane"/>
    <property type="evidence" value="ECO:0007669"/>
    <property type="project" value="UniProtKB-SubCell"/>
</dbReference>
<dbReference type="GO" id="GO:0050380">
    <property type="term" value="F:undecaprenyl-diphosphatase activity"/>
    <property type="evidence" value="ECO:0007669"/>
    <property type="project" value="UniProtKB-UniRule"/>
</dbReference>
<dbReference type="GO" id="GO:0071555">
    <property type="term" value="P:cell wall organization"/>
    <property type="evidence" value="ECO:0007669"/>
    <property type="project" value="UniProtKB-KW"/>
</dbReference>
<dbReference type="GO" id="GO:0009252">
    <property type="term" value="P:peptidoglycan biosynthetic process"/>
    <property type="evidence" value="ECO:0007669"/>
    <property type="project" value="UniProtKB-KW"/>
</dbReference>
<dbReference type="GO" id="GO:0008360">
    <property type="term" value="P:regulation of cell shape"/>
    <property type="evidence" value="ECO:0007669"/>
    <property type="project" value="UniProtKB-KW"/>
</dbReference>
<dbReference type="GO" id="GO:0046677">
    <property type="term" value="P:response to antibiotic"/>
    <property type="evidence" value="ECO:0007669"/>
    <property type="project" value="UniProtKB-UniRule"/>
</dbReference>
<dbReference type="HAMAP" id="MF_01006">
    <property type="entry name" value="Undec_diphosphatase"/>
    <property type="match status" value="1"/>
</dbReference>
<dbReference type="InterPro" id="IPR003824">
    <property type="entry name" value="UppP"/>
</dbReference>
<dbReference type="NCBIfam" id="NF001390">
    <property type="entry name" value="PRK00281.1-4"/>
    <property type="match status" value="1"/>
</dbReference>
<dbReference type="PANTHER" id="PTHR30622">
    <property type="entry name" value="UNDECAPRENYL-DIPHOSPHATASE"/>
    <property type="match status" value="1"/>
</dbReference>
<dbReference type="PANTHER" id="PTHR30622:SF3">
    <property type="entry name" value="UNDECAPRENYL-DIPHOSPHATASE"/>
    <property type="match status" value="1"/>
</dbReference>
<dbReference type="Pfam" id="PF02673">
    <property type="entry name" value="BacA"/>
    <property type="match status" value="1"/>
</dbReference>
<protein>
    <recommendedName>
        <fullName evidence="1">Undecaprenyl-diphosphatase</fullName>
        <ecNumber evidence="1">3.6.1.27</ecNumber>
    </recommendedName>
    <alternativeName>
        <fullName evidence="1">Bacitracin resistance protein</fullName>
    </alternativeName>
    <alternativeName>
        <fullName evidence="1">Undecaprenyl pyrophosphate phosphatase</fullName>
    </alternativeName>
</protein>